<protein>
    <recommendedName>
        <fullName>Protein cms1</fullName>
    </recommendedName>
</protein>
<feature type="chain" id="PRO_0000350819" description="Protein cms1">
    <location>
        <begin position="1"/>
        <end position="277"/>
    </location>
</feature>
<feature type="region of interest" description="Disordered" evidence="2">
    <location>
        <begin position="28"/>
        <end position="68"/>
    </location>
</feature>
<feature type="compositionally biased region" description="Polar residues" evidence="2">
    <location>
        <begin position="33"/>
        <end position="49"/>
    </location>
</feature>
<feature type="compositionally biased region" description="Basic residues" evidence="2">
    <location>
        <begin position="53"/>
        <end position="68"/>
    </location>
</feature>
<proteinExistence type="inferred from homology"/>
<keyword id="KW-0539">Nucleus</keyword>
<keyword id="KW-1185">Reference proteome</keyword>
<reference key="1">
    <citation type="journal article" date="2002" name="Nature">
        <title>The genome sequence of Schizosaccharomyces pombe.</title>
        <authorList>
            <person name="Wood V."/>
            <person name="Gwilliam R."/>
            <person name="Rajandream M.A."/>
            <person name="Lyne M.H."/>
            <person name="Lyne R."/>
            <person name="Stewart A."/>
            <person name="Sgouros J.G."/>
            <person name="Peat N."/>
            <person name="Hayles J."/>
            <person name="Baker S.G."/>
            <person name="Basham D."/>
            <person name="Bowman S."/>
            <person name="Brooks K."/>
            <person name="Brown D."/>
            <person name="Brown S."/>
            <person name="Chillingworth T."/>
            <person name="Churcher C.M."/>
            <person name="Collins M."/>
            <person name="Connor R."/>
            <person name="Cronin A."/>
            <person name="Davis P."/>
            <person name="Feltwell T."/>
            <person name="Fraser A."/>
            <person name="Gentles S."/>
            <person name="Goble A."/>
            <person name="Hamlin N."/>
            <person name="Harris D.E."/>
            <person name="Hidalgo J."/>
            <person name="Hodgson G."/>
            <person name="Holroyd S."/>
            <person name="Hornsby T."/>
            <person name="Howarth S."/>
            <person name="Huckle E.J."/>
            <person name="Hunt S."/>
            <person name="Jagels K."/>
            <person name="James K.D."/>
            <person name="Jones L."/>
            <person name="Jones M."/>
            <person name="Leather S."/>
            <person name="McDonald S."/>
            <person name="McLean J."/>
            <person name="Mooney P."/>
            <person name="Moule S."/>
            <person name="Mungall K.L."/>
            <person name="Murphy L.D."/>
            <person name="Niblett D."/>
            <person name="Odell C."/>
            <person name="Oliver K."/>
            <person name="O'Neil S."/>
            <person name="Pearson D."/>
            <person name="Quail M.A."/>
            <person name="Rabbinowitsch E."/>
            <person name="Rutherford K.M."/>
            <person name="Rutter S."/>
            <person name="Saunders D."/>
            <person name="Seeger K."/>
            <person name="Sharp S."/>
            <person name="Skelton J."/>
            <person name="Simmonds M.N."/>
            <person name="Squares R."/>
            <person name="Squares S."/>
            <person name="Stevens K."/>
            <person name="Taylor K."/>
            <person name="Taylor R.G."/>
            <person name="Tivey A."/>
            <person name="Walsh S.V."/>
            <person name="Warren T."/>
            <person name="Whitehead S."/>
            <person name="Woodward J.R."/>
            <person name="Volckaert G."/>
            <person name="Aert R."/>
            <person name="Robben J."/>
            <person name="Grymonprez B."/>
            <person name="Weltjens I."/>
            <person name="Vanstreels E."/>
            <person name="Rieger M."/>
            <person name="Schaefer M."/>
            <person name="Mueller-Auer S."/>
            <person name="Gabel C."/>
            <person name="Fuchs M."/>
            <person name="Duesterhoeft A."/>
            <person name="Fritzc C."/>
            <person name="Holzer E."/>
            <person name="Moestl D."/>
            <person name="Hilbert H."/>
            <person name="Borzym K."/>
            <person name="Langer I."/>
            <person name="Beck A."/>
            <person name="Lehrach H."/>
            <person name="Reinhardt R."/>
            <person name="Pohl T.M."/>
            <person name="Eger P."/>
            <person name="Zimmermann W."/>
            <person name="Wedler H."/>
            <person name="Wambutt R."/>
            <person name="Purnelle B."/>
            <person name="Goffeau A."/>
            <person name="Cadieu E."/>
            <person name="Dreano S."/>
            <person name="Gloux S."/>
            <person name="Lelaure V."/>
            <person name="Mottier S."/>
            <person name="Galibert F."/>
            <person name="Aves S.J."/>
            <person name="Xiang Z."/>
            <person name="Hunt C."/>
            <person name="Moore K."/>
            <person name="Hurst S.M."/>
            <person name="Lucas M."/>
            <person name="Rochet M."/>
            <person name="Gaillardin C."/>
            <person name="Tallada V.A."/>
            <person name="Garzon A."/>
            <person name="Thode G."/>
            <person name="Daga R.R."/>
            <person name="Cruzado L."/>
            <person name="Jimenez J."/>
            <person name="Sanchez M."/>
            <person name="del Rey F."/>
            <person name="Benito J."/>
            <person name="Dominguez A."/>
            <person name="Revuelta J.L."/>
            <person name="Moreno S."/>
            <person name="Armstrong J."/>
            <person name="Forsburg S.L."/>
            <person name="Cerutti L."/>
            <person name="Lowe T."/>
            <person name="McCombie W.R."/>
            <person name="Paulsen I."/>
            <person name="Potashkin J."/>
            <person name="Shpakovski G.V."/>
            <person name="Ussery D."/>
            <person name="Barrell B.G."/>
            <person name="Nurse P."/>
        </authorList>
    </citation>
    <scope>NUCLEOTIDE SEQUENCE [LARGE SCALE GENOMIC DNA]</scope>
    <source>
        <strain>972 / ATCC 24843</strain>
    </source>
</reference>
<organism>
    <name type="scientific">Schizosaccharomyces pombe (strain 972 / ATCC 24843)</name>
    <name type="common">Fission yeast</name>
    <dbReference type="NCBI Taxonomy" id="284812"/>
    <lineage>
        <taxon>Eukaryota</taxon>
        <taxon>Fungi</taxon>
        <taxon>Dikarya</taxon>
        <taxon>Ascomycota</taxon>
        <taxon>Taphrinomycotina</taxon>
        <taxon>Schizosaccharomycetes</taxon>
        <taxon>Schizosaccharomycetales</taxon>
        <taxon>Schizosaccharomycetaceae</taxon>
        <taxon>Schizosaccharomyces</taxon>
    </lineage>
</organism>
<dbReference type="EMBL" id="CU329671">
    <property type="protein sequence ID" value="CAA22623.1"/>
    <property type="molecule type" value="Genomic_DNA"/>
</dbReference>
<dbReference type="PIR" id="T39953">
    <property type="entry name" value="T39953"/>
</dbReference>
<dbReference type="RefSeq" id="NP_595865.1">
    <property type="nucleotide sequence ID" value="NM_001021770.2"/>
</dbReference>
<dbReference type="SMR" id="O94465"/>
<dbReference type="BioGRID" id="277133">
    <property type="interactions" value="2"/>
</dbReference>
<dbReference type="FunCoup" id="O94465">
    <property type="interactions" value="109"/>
</dbReference>
<dbReference type="STRING" id="284812.O94465"/>
<dbReference type="PaxDb" id="4896-SPBC23G7.07c.1"/>
<dbReference type="EnsemblFungi" id="SPBC23G7.07c.1">
    <property type="protein sequence ID" value="SPBC23G7.07c.1:pep"/>
    <property type="gene ID" value="SPBC23G7.07c"/>
</dbReference>
<dbReference type="GeneID" id="2540607"/>
<dbReference type="KEGG" id="spo:2540607"/>
<dbReference type="PomBase" id="SPBC23G7.07c">
    <property type="gene designation" value="cms1"/>
</dbReference>
<dbReference type="VEuPathDB" id="FungiDB:SPBC23G7.07c"/>
<dbReference type="eggNOG" id="KOG3089">
    <property type="taxonomic scope" value="Eukaryota"/>
</dbReference>
<dbReference type="HOGENOM" id="CLU_057568_1_0_1"/>
<dbReference type="InParanoid" id="O94465"/>
<dbReference type="OMA" id="DHFAQKA"/>
<dbReference type="PhylomeDB" id="O94465"/>
<dbReference type="PRO" id="PR:O94465"/>
<dbReference type="Proteomes" id="UP000002485">
    <property type="component" value="Chromosome II"/>
</dbReference>
<dbReference type="GO" id="GO:0030686">
    <property type="term" value="C:90S preribosome"/>
    <property type="evidence" value="ECO:0000266"/>
    <property type="project" value="PomBase"/>
</dbReference>
<dbReference type="GO" id="GO:0005634">
    <property type="term" value="C:nucleus"/>
    <property type="evidence" value="ECO:0000266"/>
    <property type="project" value="PomBase"/>
</dbReference>
<dbReference type="GO" id="GO:0042274">
    <property type="term" value="P:ribosomal small subunit biogenesis"/>
    <property type="evidence" value="ECO:0000266"/>
    <property type="project" value="PomBase"/>
</dbReference>
<dbReference type="InterPro" id="IPR032704">
    <property type="entry name" value="Cms1"/>
</dbReference>
<dbReference type="PANTHER" id="PTHR24030">
    <property type="entry name" value="PROTEIN CMSS1"/>
    <property type="match status" value="1"/>
</dbReference>
<dbReference type="PANTHER" id="PTHR24030:SF0">
    <property type="entry name" value="PROTEIN CMSS1"/>
    <property type="match status" value="1"/>
</dbReference>
<dbReference type="Pfam" id="PF14617">
    <property type="entry name" value="CMS1"/>
    <property type="match status" value="1"/>
</dbReference>
<gene>
    <name type="primary">cms1</name>
    <name type="ORF">SPBC23G7.07c</name>
</gene>
<comment type="function">
    <text evidence="1">May play a role in the regulation of DNA replication and cell cycle control.</text>
</comment>
<comment type="subcellular location">
    <subcellularLocation>
        <location evidence="1">Nucleus</location>
    </subcellularLocation>
</comment>
<comment type="similarity">
    <text evidence="3">Belongs to the CMS1 family.</text>
</comment>
<name>CMS1_SCHPO</name>
<accession>O94465</accession>
<sequence length="277" mass="31625">MSYTTTDADALDDQLDYQVDLVSEISVSDEESAQPTTITENFTASQNNDSAKREKRKKQRQKQKERKRAKLLELQDTNASIIQSPDTLSDLLNNYIKSIYSDLTDVELSDKVIKASYIEDTISFSKPKTVDNYPEYIQHLPGFTKKVVQNSNPEILVLCISALRAIDVLKPTKSLQNKNFKVAKLFGKHIRLEEHINYCKANKIGVGIGTTPRIAQLTNECFTCENLKYIILDYSFRDIKNNSILTSKESRKAVIDFLTSKTILENMAERKTKICFY</sequence>
<evidence type="ECO:0000250" key="1"/>
<evidence type="ECO:0000256" key="2">
    <source>
        <dbReference type="SAM" id="MobiDB-lite"/>
    </source>
</evidence>
<evidence type="ECO:0000305" key="3"/>